<name>RRF_CLOBM</name>
<proteinExistence type="inferred from homology"/>
<sequence>MIKEILKKADEKMGKSIVALKRELASMKAGRANPAMLDRIDAEYYGSMTPLNQLANISVPEARVLLIQPWDKSSMGAIEKAILKSDLGLNPSNDGTVIRLVIPELTEETRKNIVKTVKKTGEETKVAIRSIRRDCNDDVKNLKKDDVSEDDIKKTEDDIQKKTDKYIKEIDSIISAKEKEILSI</sequence>
<protein>
    <recommendedName>
        <fullName evidence="1">Ribosome-recycling factor</fullName>
        <shortName evidence="1">RRF</shortName>
    </recommendedName>
    <alternativeName>
        <fullName evidence="1">Ribosome-releasing factor</fullName>
    </alternativeName>
</protein>
<feature type="chain" id="PRO_1000090729" description="Ribosome-recycling factor">
    <location>
        <begin position="1"/>
        <end position="184"/>
    </location>
</feature>
<organism>
    <name type="scientific">Clostridium botulinum (strain Loch Maree / Type A3)</name>
    <dbReference type="NCBI Taxonomy" id="498214"/>
    <lineage>
        <taxon>Bacteria</taxon>
        <taxon>Bacillati</taxon>
        <taxon>Bacillota</taxon>
        <taxon>Clostridia</taxon>
        <taxon>Eubacteriales</taxon>
        <taxon>Clostridiaceae</taxon>
        <taxon>Clostridium</taxon>
    </lineage>
</organism>
<dbReference type="EMBL" id="CP000962">
    <property type="protein sequence ID" value="ACA55555.1"/>
    <property type="molecule type" value="Genomic_DNA"/>
</dbReference>
<dbReference type="RefSeq" id="WP_012343522.1">
    <property type="nucleotide sequence ID" value="NC_010520.1"/>
</dbReference>
<dbReference type="SMR" id="B1KWM1"/>
<dbReference type="KEGG" id="cbl:CLK_1808"/>
<dbReference type="HOGENOM" id="CLU_073981_2_0_9"/>
<dbReference type="GO" id="GO:0005737">
    <property type="term" value="C:cytoplasm"/>
    <property type="evidence" value="ECO:0007669"/>
    <property type="project" value="UniProtKB-SubCell"/>
</dbReference>
<dbReference type="GO" id="GO:0043023">
    <property type="term" value="F:ribosomal large subunit binding"/>
    <property type="evidence" value="ECO:0007669"/>
    <property type="project" value="TreeGrafter"/>
</dbReference>
<dbReference type="GO" id="GO:0006415">
    <property type="term" value="P:translational termination"/>
    <property type="evidence" value="ECO:0007669"/>
    <property type="project" value="UniProtKB-UniRule"/>
</dbReference>
<dbReference type="CDD" id="cd00520">
    <property type="entry name" value="RRF"/>
    <property type="match status" value="1"/>
</dbReference>
<dbReference type="FunFam" id="1.10.132.20:FF:000001">
    <property type="entry name" value="Ribosome-recycling factor"/>
    <property type="match status" value="1"/>
</dbReference>
<dbReference type="FunFam" id="3.30.1360.40:FF:000001">
    <property type="entry name" value="Ribosome-recycling factor"/>
    <property type="match status" value="1"/>
</dbReference>
<dbReference type="Gene3D" id="3.30.1360.40">
    <property type="match status" value="1"/>
</dbReference>
<dbReference type="Gene3D" id="1.10.132.20">
    <property type="entry name" value="Ribosome-recycling factor"/>
    <property type="match status" value="1"/>
</dbReference>
<dbReference type="HAMAP" id="MF_00040">
    <property type="entry name" value="RRF"/>
    <property type="match status" value="1"/>
</dbReference>
<dbReference type="InterPro" id="IPR002661">
    <property type="entry name" value="Ribosome_recyc_fac"/>
</dbReference>
<dbReference type="InterPro" id="IPR023584">
    <property type="entry name" value="Ribosome_recyc_fac_dom"/>
</dbReference>
<dbReference type="InterPro" id="IPR036191">
    <property type="entry name" value="RRF_sf"/>
</dbReference>
<dbReference type="NCBIfam" id="TIGR00496">
    <property type="entry name" value="frr"/>
    <property type="match status" value="1"/>
</dbReference>
<dbReference type="PANTHER" id="PTHR20982:SF3">
    <property type="entry name" value="MITOCHONDRIAL RIBOSOME RECYCLING FACTOR PSEUDO 1"/>
    <property type="match status" value="1"/>
</dbReference>
<dbReference type="PANTHER" id="PTHR20982">
    <property type="entry name" value="RIBOSOME RECYCLING FACTOR"/>
    <property type="match status" value="1"/>
</dbReference>
<dbReference type="Pfam" id="PF01765">
    <property type="entry name" value="RRF"/>
    <property type="match status" value="1"/>
</dbReference>
<dbReference type="SUPFAM" id="SSF55194">
    <property type="entry name" value="Ribosome recycling factor, RRF"/>
    <property type="match status" value="1"/>
</dbReference>
<gene>
    <name evidence="1" type="primary">frr</name>
    <name type="ordered locus">CLK_1808</name>
</gene>
<reference key="1">
    <citation type="journal article" date="2007" name="PLoS ONE">
        <title>Analysis of the neurotoxin complex genes in Clostridium botulinum A1-A4 and B1 strains: BoNT/A3, /Ba4 and /B1 clusters are located within plasmids.</title>
        <authorList>
            <person name="Smith T.J."/>
            <person name="Hill K.K."/>
            <person name="Foley B.T."/>
            <person name="Detter J.C."/>
            <person name="Munk A.C."/>
            <person name="Bruce D.C."/>
            <person name="Doggett N.A."/>
            <person name="Smith L.A."/>
            <person name="Marks J.D."/>
            <person name="Xie G."/>
            <person name="Brettin T.S."/>
        </authorList>
    </citation>
    <scope>NUCLEOTIDE SEQUENCE [LARGE SCALE GENOMIC DNA]</scope>
    <source>
        <strain>Loch Maree / Type A3</strain>
    </source>
</reference>
<accession>B1KWM1</accession>
<evidence type="ECO:0000255" key="1">
    <source>
        <dbReference type="HAMAP-Rule" id="MF_00040"/>
    </source>
</evidence>
<comment type="function">
    <text evidence="1">Responsible for the release of ribosomes from messenger RNA at the termination of protein biosynthesis. May increase the efficiency of translation by recycling ribosomes from one round of translation to another.</text>
</comment>
<comment type="subcellular location">
    <subcellularLocation>
        <location evidence="1">Cytoplasm</location>
    </subcellularLocation>
</comment>
<comment type="similarity">
    <text evidence="1">Belongs to the RRF family.</text>
</comment>
<keyword id="KW-0963">Cytoplasm</keyword>
<keyword id="KW-0648">Protein biosynthesis</keyword>